<organism>
    <name type="scientific">Baumannia cicadellinicola subsp. Homalodisca coagulata</name>
    <dbReference type="NCBI Taxonomy" id="374463"/>
    <lineage>
        <taxon>Bacteria</taxon>
        <taxon>Pseudomonadati</taxon>
        <taxon>Pseudomonadota</taxon>
        <taxon>Gammaproteobacteria</taxon>
        <taxon>Candidatus Palibaumannia</taxon>
    </lineage>
</organism>
<reference key="1">
    <citation type="journal article" date="2006" name="PLoS Biol.">
        <title>Metabolic complementarity and genomics of the dual bacterial symbiosis of sharpshooters.</title>
        <authorList>
            <person name="Wu D."/>
            <person name="Daugherty S.C."/>
            <person name="Van Aken S.E."/>
            <person name="Pai G.H."/>
            <person name="Watkins K.L."/>
            <person name="Khouri H."/>
            <person name="Tallon L.J."/>
            <person name="Zaborsky J.M."/>
            <person name="Dunbar H.E."/>
            <person name="Tran P.L."/>
            <person name="Moran N.A."/>
            <person name="Eisen J.A."/>
        </authorList>
    </citation>
    <scope>NUCLEOTIDE SEQUENCE [LARGE SCALE GENOMIC DNA]</scope>
</reference>
<protein>
    <recommendedName>
        <fullName evidence="1">NADH-quinone oxidoreductase subunit I</fullName>
        <ecNumber evidence="1">7.1.1.-</ecNumber>
    </recommendedName>
    <alternativeName>
        <fullName evidence="1">NADH dehydrogenase I subunit I</fullName>
    </alternativeName>
    <alternativeName>
        <fullName evidence="1">NDH-1 subunit I</fullName>
    </alternativeName>
</protein>
<comment type="function">
    <text evidence="1">NDH-1 shuttles electrons from NADH, via FMN and iron-sulfur (Fe-S) centers, to quinones in the respiratory chain. The immediate electron acceptor for the enzyme in this species is believed to be ubiquinone. Couples the redox reaction to proton translocation (for every two electrons transferred, four hydrogen ions are translocated across the cytoplasmic membrane), and thus conserves the redox energy in a proton gradient.</text>
</comment>
<comment type="catalytic activity">
    <reaction evidence="1">
        <text>a quinone + NADH + 5 H(+)(in) = a quinol + NAD(+) + 4 H(+)(out)</text>
        <dbReference type="Rhea" id="RHEA:57888"/>
        <dbReference type="ChEBI" id="CHEBI:15378"/>
        <dbReference type="ChEBI" id="CHEBI:24646"/>
        <dbReference type="ChEBI" id="CHEBI:57540"/>
        <dbReference type="ChEBI" id="CHEBI:57945"/>
        <dbReference type="ChEBI" id="CHEBI:132124"/>
    </reaction>
</comment>
<comment type="cofactor">
    <cofactor evidence="1">
        <name>[4Fe-4S] cluster</name>
        <dbReference type="ChEBI" id="CHEBI:49883"/>
    </cofactor>
    <text evidence="1">Binds 2 [4Fe-4S] clusters per subunit.</text>
</comment>
<comment type="subunit">
    <text evidence="1">NDH-1 is composed of 14 different subunits. Subunits NuoA, H, J, K, L, M, N constitute the membrane sector of the complex.</text>
</comment>
<comment type="subcellular location">
    <subcellularLocation>
        <location evidence="1">Cell membrane</location>
        <topology evidence="1">Peripheral membrane protein</topology>
    </subcellularLocation>
</comment>
<comment type="similarity">
    <text evidence="1">Belongs to the complex I 23 kDa subunit family.</text>
</comment>
<evidence type="ECO:0000255" key="1">
    <source>
        <dbReference type="HAMAP-Rule" id="MF_01351"/>
    </source>
</evidence>
<feature type="chain" id="PRO_0000245698" description="NADH-quinone oxidoreductase subunit I">
    <location>
        <begin position="1"/>
        <end position="180"/>
    </location>
</feature>
<feature type="domain" description="4Fe-4S ferredoxin-type 1" evidence="1">
    <location>
        <begin position="46"/>
        <end position="80"/>
    </location>
</feature>
<feature type="domain" description="4Fe-4S ferredoxin-type 2" evidence="1">
    <location>
        <begin position="90"/>
        <end position="119"/>
    </location>
</feature>
<feature type="binding site" evidence="1">
    <location>
        <position position="60"/>
    </location>
    <ligand>
        <name>[4Fe-4S] cluster</name>
        <dbReference type="ChEBI" id="CHEBI:49883"/>
        <label>1</label>
    </ligand>
</feature>
<feature type="binding site" evidence="1">
    <location>
        <position position="63"/>
    </location>
    <ligand>
        <name>[4Fe-4S] cluster</name>
        <dbReference type="ChEBI" id="CHEBI:49883"/>
        <label>1</label>
    </ligand>
</feature>
<feature type="binding site" evidence="1">
    <location>
        <position position="66"/>
    </location>
    <ligand>
        <name>[4Fe-4S] cluster</name>
        <dbReference type="ChEBI" id="CHEBI:49883"/>
        <label>1</label>
    </ligand>
</feature>
<feature type="binding site" evidence="1">
    <location>
        <position position="70"/>
    </location>
    <ligand>
        <name>[4Fe-4S] cluster</name>
        <dbReference type="ChEBI" id="CHEBI:49883"/>
        <label>2</label>
    </ligand>
</feature>
<feature type="binding site" evidence="1">
    <location>
        <position position="99"/>
    </location>
    <ligand>
        <name>[4Fe-4S] cluster</name>
        <dbReference type="ChEBI" id="CHEBI:49883"/>
        <label>2</label>
    </ligand>
</feature>
<feature type="binding site" evidence="1">
    <location>
        <position position="102"/>
    </location>
    <ligand>
        <name>[4Fe-4S] cluster</name>
        <dbReference type="ChEBI" id="CHEBI:49883"/>
        <label>2</label>
    </ligand>
</feature>
<feature type="binding site" evidence="1">
    <location>
        <position position="105"/>
    </location>
    <ligand>
        <name>[4Fe-4S] cluster</name>
        <dbReference type="ChEBI" id="CHEBI:49883"/>
        <label>2</label>
    </ligand>
</feature>
<feature type="binding site" evidence="1">
    <location>
        <position position="109"/>
    </location>
    <ligand>
        <name>[4Fe-4S] cluster</name>
        <dbReference type="ChEBI" id="CHEBI:49883"/>
        <label>1</label>
    </ligand>
</feature>
<keyword id="KW-0004">4Fe-4S</keyword>
<keyword id="KW-1003">Cell membrane</keyword>
<keyword id="KW-0408">Iron</keyword>
<keyword id="KW-0411">Iron-sulfur</keyword>
<keyword id="KW-0472">Membrane</keyword>
<keyword id="KW-0479">Metal-binding</keyword>
<keyword id="KW-0520">NAD</keyword>
<keyword id="KW-0874">Quinone</keyword>
<keyword id="KW-1185">Reference proteome</keyword>
<keyword id="KW-0677">Repeat</keyword>
<keyword id="KW-1278">Translocase</keyword>
<keyword id="KW-0830">Ubiquinone</keyword>
<gene>
    <name evidence="1" type="primary">nuoI</name>
    <name type="ordered locus">BCI_0374</name>
</gene>
<dbReference type="EC" id="7.1.1.-" evidence="1"/>
<dbReference type="EMBL" id="CP000238">
    <property type="protein sequence ID" value="ABF13918.1"/>
    <property type="molecule type" value="Genomic_DNA"/>
</dbReference>
<dbReference type="RefSeq" id="WP_011520551.1">
    <property type="nucleotide sequence ID" value="NC_007984.1"/>
</dbReference>
<dbReference type="SMR" id="Q1LT96"/>
<dbReference type="STRING" id="374463.BCI_0374"/>
<dbReference type="KEGG" id="bci:BCI_0374"/>
<dbReference type="HOGENOM" id="CLU_067218_4_3_6"/>
<dbReference type="OrthoDB" id="9808559at2"/>
<dbReference type="Proteomes" id="UP000002427">
    <property type="component" value="Chromosome"/>
</dbReference>
<dbReference type="GO" id="GO:0005886">
    <property type="term" value="C:plasma membrane"/>
    <property type="evidence" value="ECO:0007669"/>
    <property type="project" value="UniProtKB-SubCell"/>
</dbReference>
<dbReference type="GO" id="GO:0051539">
    <property type="term" value="F:4 iron, 4 sulfur cluster binding"/>
    <property type="evidence" value="ECO:0007669"/>
    <property type="project" value="UniProtKB-KW"/>
</dbReference>
<dbReference type="GO" id="GO:0005506">
    <property type="term" value="F:iron ion binding"/>
    <property type="evidence" value="ECO:0007669"/>
    <property type="project" value="UniProtKB-UniRule"/>
</dbReference>
<dbReference type="GO" id="GO:0050136">
    <property type="term" value="F:NADH:ubiquinone reductase (non-electrogenic) activity"/>
    <property type="evidence" value="ECO:0007669"/>
    <property type="project" value="UniProtKB-UniRule"/>
</dbReference>
<dbReference type="GO" id="GO:0048038">
    <property type="term" value="F:quinone binding"/>
    <property type="evidence" value="ECO:0007669"/>
    <property type="project" value="UniProtKB-KW"/>
</dbReference>
<dbReference type="GO" id="GO:0009060">
    <property type="term" value="P:aerobic respiration"/>
    <property type="evidence" value="ECO:0007669"/>
    <property type="project" value="TreeGrafter"/>
</dbReference>
<dbReference type="FunFam" id="3.30.70.3270:FF:000002">
    <property type="entry name" value="NADH-quinone oxidoreductase subunit I"/>
    <property type="match status" value="1"/>
</dbReference>
<dbReference type="Gene3D" id="3.30.70.3270">
    <property type="match status" value="1"/>
</dbReference>
<dbReference type="HAMAP" id="MF_01351">
    <property type="entry name" value="NDH1_NuoI"/>
    <property type="match status" value="1"/>
</dbReference>
<dbReference type="InterPro" id="IPR017896">
    <property type="entry name" value="4Fe4S_Fe-S-bd"/>
</dbReference>
<dbReference type="InterPro" id="IPR017900">
    <property type="entry name" value="4Fe4S_Fe_S_CS"/>
</dbReference>
<dbReference type="InterPro" id="IPR010226">
    <property type="entry name" value="NADH_quinone_OxRdtase_chainI"/>
</dbReference>
<dbReference type="NCBIfam" id="TIGR01971">
    <property type="entry name" value="NuoI"/>
    <property type="match status" value="1"/>
</dbReference>
<dbReference type="NCBIfam" id="NF004536">
    <property type="entry name" value="PRK05888.1-1"/>
    <property type="match status" value="1"/>
</dbReference>
<dbReference type="PANTHER" id="PTHR10849:SF20">
    <property type="entry name" value="NADH DEHYDROGENASE [UBIQUINONE] IRON-SULFUR PROTEIN 8, MITOCHONDRIAL"/>
    <property type="match status" value="1"/>
</dbReference>
<dbReference type="PANTHER" id="PTHR10849">
    <property type="entry name" value="NADH DEHYDROGENASE UBIQUINONE IRON-SULFUR PROTEIN 8, MITOCHONDRIAL"/>
    <property type="match status" value="1"/>
</dbReference>
<dbReference type="Pfam" id="PF12838">
    <property type="entry name" value="Fer4_7"/>
    <property type="match status" value="1"/>
</dbReference>
<dbReference type="SUPFAM" id="SSF54862">
    <property type="entry name" value="4Fe-4S ferredoxins"/>
    <property type="match status" value="1"/>
</dbReference>
<dbReference type="PROSITE" id="PS00198">
    <property type="entry name" value="4FE4S_FER_1"/>
    <property type="match status" value="2"/>
</dbReference>
<dbReference type="PROSITE" id="PS51379">
    <property type="entry name" value="4FE4S_FER_2"/>
    <property type="match status" value="2"/>
</dbReference>
<proteinExistence type="inferred from homology"/>
<name>NUOI_BAUCH</name>
<sequence>MTLKQLVTGCYTILRSIWMIGMQAFNKRETQMYPDIPIYQTSRFRGRIVLTCDPDGYERCVACNLCAVACPVDCISLQKTESKEGRWYPEFFRINFSRCIFCGLCEEACPTTAIQLTPDFEMAEFKRQDLVYEKEDLLIRGPGKYPEYNFYRMAGIACNDKLKGHAENETRPINVKDLLP</sequence>
<accession>Q1LT96</accession>